<dbReference type="EMBL" id="AC006059">
    <property type="status" value="NOT_ANNOTATED_CDS"/>
    <property type="molecule type" value="Genomic_DNA"/>
</dbReference>
<dbReference type="EMBL" id="BC036050">
    <property type="protein sequence ID" value="AAH36050.1"/>
    <property type="molecule type" value="mRNA"/>
</dbReference>
<dbReference type="CCDS" id="CCDS2705.1"/>
<dbReference type="RefSeq" id="NP_653320.3">
    <property type="nucleotide sequence ID" value="NM_144719.3"/>
</dbReference>
<dbReference type="SMR" id="Q8IYE1"/>
<dbReference type="BioGRID" id="127436">
    <property type="interactions" value="52"/>
</dbReference>
<dbReference type="FunCoup" id="Q8IYE1">
    <property type="interactions" value="427"/>
</dbReference>
<dbReference type="IntAct" id="Q8IYE1">
    <property type="interactions" value="63"/>
</dbReference>
<dbReference type="STRING" id="9606.ENSP00000309836"/>
<dbReference type="GlyGen" id="Q8IYE1">
    <property type="glycosylation" value="1 site, 2 O-linked glycans (1 site)"/>
</dbReference>
<dbReference type="iPTMnet" id="Q8IYE1"/>
<dbReference type="PhosphoSitePlus" id="Q8IYE1"/>
<dbReference type="BioMuta" id="CCDC13"/>
<dbReference type="DMDM" id="229462823"/>
<dbReference type="jPOST" id="Q8IYE1"/>
<dbReference type="MassIVE" id="Q8IYE1"/>
<dbReference type="PaxDb" id="9606-ENSP00000309836"/>
<dbReference type="PeptideAtlas" id="Q8IYE1"/>
<dbReference type="ProteomicsDB" id="71164"/>
<dbReference type="Antibodypedia" id="48468">
    <property type="antibodies" value="72 antibodies from 15 providers"/>
</dbReference>
<dbReference type="DNASU" id="152206"/>
<dbReference type="Ensembl" id="ENST00000310232.11">
    <property type="protein sequence ID" value="ENSP00000309836.6"/>
    <property type="gene ID" value="ENSG00000244607.7"/>
</dbReference>
<dbReference type="GeneID" id="152206"/>
<dbReference type="KEGG" id="hsa:152206"/>
<dbReference type="MANE-Select" id="ENST00000310232.11">
    <property type="protein sequence ID" value="ENSP00000309836.6"/>
    <property type="RefSeq nucleotide sequence ID" value="NM_144719.4"/>
    <property type="RefSeq protein sequence ID" value="NP_653320.3"/>
</dbReference>
<dbReference type="UCSC" id="uc003cly.5">
    <property type="organism name" value="human"/>
</dbReference>
<dbReference type="AGR" id="HGNC:26358"/>
<dbReference type="CTD" id="152206"/>
<dbReference type="DisGeNET" id="152206"/>
<dbReference type="GeneCards" id="CCDC13"/>
<dbReference type="HGNC" id="HGNC:26358">
    <property type="gene designation" value="CCDC13"/>
</dbReference>
<dbReference type="HPA" id="ENSG00000244607">
    <property type="expression patterns" value="Tissue enhanced (fallopian tube, retina, testis)"/>
</dbReference>
<dbReference type="neXtProt" id="NX_Q8IYE1"/>
<dbReference type="OpenTargets" id="ENSG00000244607"/>
<dbReference type="PharmGKB" id="PA134974073"/>
<dbReference type="VEuPathDB" id="HostDB:ENSG00000244607"/>
<dbReference type="eggNOG" id="ENOG502QSV1">
    <property type="taxonomic scope" value="Eukaryota"/>
</dbReference>
<dbReference type="GeneTree" id="ENSGT00390000000596"/>
<dbReference type="HOGENOM" id="CLU_026686_0_0_1"/>
<dbReference type="InParanoid" id="Q8IYE1"/>
<dbReference type="OMA" id="VNINTMN"/>
<dbReference type="OrthoDB" id="10258312at2759"/>
<dbReference type="PAN-GO" id="Q8IYE1">
    <property type="GO annotations" value="3 GO annotations based on evolutionary models"/>
</dbReference>
<dbReference type="PhylomeDB" id="Q8IYE1"/>
<dbReference type="TreeFam" id="TF328506"/>
<dbReference type="PathwayCommons" id="Q8IYE1"/>
<dbReference type="SignaLink" id="Q8IYE1"/>
<dbReference type="BioGRID-ORCS" id="152206">
    <property type="hits" value="10 hits in 1144 CRISPR screens"/>
</dbReference>
<dbReference type="ChiTaRS" id="CCDC13">
    <property type="organism name" value="human"/>
</dbReference>
<dbReference type="GenomeRNAi" id="152206"/>
<dbReference type="Pharos" id="Q8IYE1">
    <property type="development level" value="Tbio"/>
</dbReference>
<dbReference type="PRO" id="PR:Q8IYE1"/>
<dbReference type="Proteomes" id="UP000005640">
    <property type="component" value="Chromosome 3"/>
</dbReference>
<dbReference type="RNAct" id="Q8IYE1">
    <property type="molecule type" value="protein"/>
</dbReference>
<dbReference type="Bgee" id="ENSG00000244607">
    <property type="expression patterns" value="Expressed in right uterine tube and 106 other cell types or tissues"/>
</dbReference>
<dbReference type="GO" id="GO:0042995">
    <property type="term" value="C:cell projection"/>
    <property type="evidence" value="ECO:0007669"/>
    <property type="project" value="UniProtKB-KW"/>
</dbReference>
<dbReference type="GO" id="GO:0034451">
    <property type="term" value="C:centriolar satellite"/>
    <property type="evidence" value="ECO:0000314"/>
    <property type="project" value="SYSCILIA_CCNET"/>
</dbReference>
<dbReference type="GO" id="GO:0005813">
    <property type="term" value="C:centrosome"/>
    <property type="evidence" value="ECO:0000314"/>
    <property type="project" value="SYSCILIA_CCNET"/>
</dbReference>
<dbReference type="GO" id="GO:0005737">
    <property type="term" value="C:cytoplasm"/>
    <property type="evidence" value="ECO:0007669"/>
    <property type="project" value="UniProtKB-KW"/>
</dbReference>
<dbReference type="GO" id="GO:0031122">
    <property type="term" value="P:cytoplasmic microtubule organization"/>
    <property type="evidence" value="ECO:0000315"/>
    <property type="project" value="SYSCILIA_CCNET"/>
</dbReference>
<dbReference type="GO" id="GO:0006974">
    <property type="term" value="P:DNA damage response"/>
    <property type="evidence" value="ECO:0000315"/>
    <property type="project" value="SYSCILIA_CCNET"/>
</dbReference>
<dbReference type="GO" id="GO:1905515">
    <property type="term" value="P:non-motile cilium assembly"/>
    <property type="evidence" value="ECO:0000314"/>
    <property type="project" value="SYSCILIA_CCNET"/>
</dbReference>
<dbReference type="InterPro" id="IPR038929">
    <property type="entry name" value="CCDC13"/>
</dbReference>
<dbReference type="PANTHER" id="PTHR31935">
    <property type="entry name" value="COILED-COIL DOMAIN-CONTAINING PROTEIN 13"/>
    <property type="match status" value="1"/>
</dbReference>
<dbReference type="PANTHER" id="PTHR31935:SF1">
    <property type="entry name" value="COILED-COIL DOMAIN-CONTAINING PROTEIN 13"/>
    <property type="match status" value="1"/>
</dbReference>
<sequence>MAADESSQNTLRLQFKAMQEMQHKRLQKQMEKKREKELSLKSRADDQEEPLEVSDGLSLLHAGEPNSKNSFEKRVLEDEIEHLRNELRETVDENGRLYKLLKERDFEIKHLKKKIEEDRFAFTGTAGVAGDVVATKIVELSKKNRLLMAESEGAKTRVKQLTNRIQELERELQTALTRLSAKGATDAGAKPPRAQMGDRALLETPEVKALQDRLVATNLKMSDLRNQIQSVKQELRMAQKVLAREVGEDINVQQLLSSPGTWRGRAQQILVLQSKVQELEKQLGQARSQSAGTASDELSVYPDPRKLSAQEKNLLRIRSLEREKQEGLEKLASERDVLQRELEELKKKFEGMRSRNKLLSSEMKTLKSQMGTLVEKGRHDDELIDALMDQLKQLQEILGSLSLQEEKTRVSQHHLDQQLNSEAQRSNSLVAQLQAMVAEREAKVRQLEMEIGQLNVHYLRNKGVGEGSSGREVSPAYTQFLEDPGLTKSPASAGDHVGRLGSSRSVTSLGHTLVESALTRPSLPSPHRTSPRFSDSPEQKGWQAQVSEIKALWQAAEVERDRLTEFVTVLQKRVEESNSKLLESERKLQEERHRTVVLEQHLEKIRLEPGKASASQRAAPRTKTGLPTSNNRHNPTGSEKKDPSFAQLSDVPVESQMEELTTRLAIQVEENEMLKAALGSALRGKEEDFRMYHEILGQVKSVFLQALRQQKTGKQ</sequence>
<feature type="chain" id="PRO_0000089409" description="Coiled-coil domain-containing protein 13">
    <location>
        <begin position="1"/>
        <end position="715"/>
    </location>
</feature>
<feature type="region of interest" description="Disordered" evidence="3">
    <location>
        <begin position="20"/>
        <end position="65"/>
    </location>
</feature>
<feature type="region of interest" description="Disordered" evidence="3">
    <location>
        <begin position="482"/>
        <end position="541"/>
    </location>
</feature>
<feature type="region of interest" description="Disordered" evidence="3">
    <location>
        <begin position="607"/>
        <end position="645"/>
    </location>
</feature>
<feature type="coiled-coil region" evidence="2">
    <location>
        <begin position="16"/>
        <end position="105"/>
    </location>
</feature>
<feature type="coiled-coil region" evidence="2">
    <location>
        <begin position="134"/>
        <end position="458"/>
    </location>
</feature>
<feature type="coiled-coil region" evidence="2">
    <location>
        <begin position="554"/>
        <end position="608"/>
    </location>
</feature>
<feature type="coiled-coil region" evidence="2">
    <location>
        <begin position="653"/>
        <end position="683"/>
    </location>
</feature>
<feature type="compositionally biased region" description="Basic and acidic residues" evidence="3">
    <location>
        <begin position="28"/>
        <end position="45"/>
    </location>
</feature>
<feature type="compositionally biased region" description="Polar residues" evidence="3">
    <location>
        <begin position="625"/>
        <end position="637"/>
    </location>
</feature>
<feature type="modified residue" description="Phosphoserine" evidence="1">
    <location>
        <position position="258"/>
    </location>
</feature>
<feature type="modified residue" description="Phosphoserine" evidence="1">
    <location>
        <position position="469"/>
    </location>
</feature>
<feature type="modified residue" description="Phosphoserine" evidence="1">
    <location>
        <position position="536"/>
    </location>
</feature>
<feature type="sequence variant" id="VAR_055093" description="In dbSNP:rs17238798.">
    <original>R</original>
    <variation>W</variation>
    <location>
        <position position="25"/>
    </location>
</feature>
<feature type="sequence variant" id="VAR_055094" description="In dbSNP:rs17853515." evidence="4">
    <original>E</original>
    <variation>V</variation>
    <location>
        <position position="375"/>
    </location>
</feature>
<feature type="sequence variant" id="VAR_033664" description="In dbSNP:rs12495805.">
    <original>S</original>
    <variation>T</variation>
    <location>
        <position position="547"/>
    </location>
</feature>
<name>CCD13_HUMAN</name>
<accession>Q8IYE1</accession>
<proteinExistence type="evidence at protein level"/>
<protein>
    <recommendedName>
        <fullName evidence="6">Coiled-coil domain-containing protein 13</fullName>
    </recommendedName>
</protein>
<evidence type="ECO:0000250" key="1">
    <source>
        <dbReference type="UniProtKB" id="D3YV10"/>
    </source>
</evidence>
<evidence type="ECO:0000255" key="2"/>
<evidence type="ECO:0000256" key="3">
    <source>
        <dbReference type="SAM" id="MobiDB-lite"/>
    </source>
</evidence>
<evidence type="ECO:0000269" key="4">
    <source>
    </source>
</evidence>
<evidence type="ECO:0000269" key="5">
    <source>
    </source>
</evidence>
<evidence type="ECO:0000305" key="6"/>
<evidence type="ECO:0000312" key="7">
    <source>
        <dbReference type="HGNC" id="HGNC:26358"/>
    </source>
</evidence>
<keyword id="KW-0966">Cell projection</keyword>
<keyword id="KW-0970">Cilium biogenesis/degradation</keyword>
<keyword id="KW-0175">Coiled coil</keyword>
<keyword id="KW-0963">Cytoplasm</keyword>
<keyword id="KW-0206">Cytoskeleton</keyword>
<keyword id="KW-0597">Phosphoprotein</keyword>
<keyword id="KW-1267">Proteomics identification</keyword>
<keyword id="KW-1185">Reference proteome</keyword>
<organism>
    <name type="scientific">Homo sapiens</name>
    <name type="common">Human</name>
    <dbReference type="NCBI Taxonomy" id="9606"/>
    <lineage>
        <taxon>Eukaryota</taxon>
        <taxon>Metazoa</taxon>
        <taxon>Chordata</taxon>
        <taxon>Craniata</taxon>
        <taxon>Vertebrata</taxon>
        <taxon>Euteleostomi</taxon>
        <taxon>Mammalia</taxon>
        <taxon>Eutheria</taxon>
        <taxon>Euarchontoglires</taxon>
        <taxon>Primates</taxon>
        <taxon>Haplorrhini</taxon>
        <taxon>Catarrhini</taxon>
        <taxon>Hominidae</taxon>
        <taxon>Homo</taxon>
    </lineage>
</organism>
<comment type="function">
    <text evidence="5">Required for primary cilia formation and promotes the localization of the ciliopathy protein BBS4 to both centriolar satellites and cilia.</text>
</comment>
<comment type="subunit">
    <text evidence="5">Interacts with PCM1, CEP290 and PCNT.</text>
</comment>
<comment type="interaction">
    <interactant intactId="EBI-10961312">
        <id>Q8IYE1</id>
    </interactant>
    <interactant intactId="EBI-12809012">
        <id>Q8WXK1</id>
        <label>ASB15</label>
    </interactant>
    <organismsDiffer>false</organismsDiffer>
    <experiments>3</experiments>
</comment>
<comment type="interaction">
    <interactant intactId="EBI-10961312">
        <id>Q8IYE1</id>
    </interactant>
    <interactant intactId="EBI-11530605">
        <id>Q9H257-2</id>
        <label>CARD9</label>
    </interactant>
    <organismsDiffer>false</organismsDiffer>
    <experiments>3</experiments>
</comment>
<comment type="interaction">
    <interactant intactId="EBI-10961312">
        <id>Q8IYE1</id>
    </interactant>
    <interactant intactId="EBI-744556">
        <id>Q96HB5</id>
        <label>CCDC120</label>
    </interactant>
    <organismsDiffer>false</organismsDiffer>
    <experiments>3</experiments>
</comment>
<comment type="interaction">
    <interactant intactId="EBI-10961312">
        <id>Q8IYE1</id>
    </interactant>
    <interactant intactId="EBI-10175300">
        <id>Q8TD31-3</id>
        <label>CCHCR1</label>
    </interactant>
    <organismsDiffer>false</organismsDiffer>
    <experiments>6</experiments>
</comment>
<comment type="interaction">
    <interactant intactId="EBI-10961312">
        <id>Q8IYE1</id>
    </interactant>
    <interactant intactId="EBI-375013">
        <id>P30281</id>
        <label>CCND3</label>
    </interactant>
    <organismsDiffer>false</organismsDiffer>
    <experiments>3</experiments>
</comment>
<comment type="interaction">
    <interactant intactId="EBI-10961312">
        <id>Q8IYE1</id>
    </interactant>
    <interactant intactId="EBI-1181367">
        <id>Q01850</id>
        <label>CDR2</label>
    </interactant>
    <organismsDiffer>false</organismsDiffer>
    <experiments>3</experiments>
</comment>
<comment type="interaction">
    <interactant intactId="EBI-10961312">
        <id>Q8IYE1</id>
    </interactant>
    <interactant intactId="EBI-11988027">
        <id>Q9NRI5-2</id>
        <label>DISC1</label>
    </interactant>
    <organismsDiffer>false</organismsDiffer>
    <experiments>3</experiments>
</comment>
<comment type="interaction">
    <interactant intactId="EBI-10961312">
        <id>Q8IYE1</id>
    </interactant>
    <interactant intactId="EBI-2349927">
        <id>Q5JST6</id>
        <label>EFHC2</label>
    </interactant>
    <organismsDiffer>false</organismsDiffer>
    <experiments>3</experiments>
</comment>
<comment type="interaction">
    <interactant intactId="EBI-10961312">
        <id>Q8IYE1</id>
    </interactant>
    <interactant intactId="EBI-2339219">
        <id>Q08426</id>
        <label>EHHADH</label>
    </interactant>
    <organismsDiffer>false</organismsDiffer>
    <experiments>3</experiments>
</comment>
<comment type="interaction">
    <interactant intactId="EBI-10961312">
        <id>Q8IYE1</id>
    </interactant>
    <interactant intactId="EBI-744099">
        <id>Q9H0I2</id>
        <label>ENKD1</label>
    </interactant>
    <organismsDiffer>false</organismsDiffer>
    <experiments>3</experiments>
</comment>
<comment type="interaction">
    <interactant intactId="EBI-10961312">
        <id>Q8IYE1</id>
    </interactant>
    <interactant intactId="EBI-719941">
        <id>Q3B820</id>
        <label>FAM161A</label>
    </interactant>
    <organismsDiffer>false</organismsDiffer>
    <experiments>3</experiments>
</comment>
<comment type="interaction">
    <interactant intactId="EBI-10961312">
        <id>Q8IYE1</id>
    </interactant>
    <interactant intactId="EBI-7225287">
        <id>Q96MY7</id>
        <label>FAM161B</label>
    </interactant>
    <organismsDiffer>false</organismsDiffer>
    <experiments>3</experiments>
</comment>
<comment type="interaction">
    <interactant intactId="EBI-10961312">
        <id>Q8IYE1</id>
    </interactant>
    <interactant intactId="EBI-12006844">
        <id>A6H8Z2</id>
        <label>FAM221B</label>
    </interactant>
    <organismsDiffer>false</organismsDiffer>
    <experiments>3</experiments>
</comment>
<comment type="interaction">
    <interactant intactId="EBI-10961312">
        <id>Q8IYE1</id>
    </interactant>
    <interactant intactId="EBI-6658203">
        <id>Q86YD7</id>
        <label>FAM90A1</label>
    </interactant>
    <organismsDiffer>false</organismsDiffer>
    <experiments>3</experiments>
</comment>
<comment type="interaction">
    <interactant intactId="EBI-10961312">
        <id>Q8IYE1</id>
    </interactant>
    <interactant intactId="EBI-11977403">
        <id>A0A0C3SFZ9</id>
        <label>FCHO1</label>
    </interactant>
    <organismsDiffer>false</organismsDiffer>
    <experiments>3</experiments>
</comment>
<comment type="interaction">
    <interactant intactId="EBI-10961312">
        <id>Q8IYE1</id>
    </interactant>
    <interactant intactId="EBI-2548508">
        <id>Q96IK5</id>
        <label>GMCL1</label>
    </interactant>
    <organismsDiffer>false</organismsDiffer>
    <experiments>5</experiments>
</comment>
<comment type="interaction">
    <interactant intactId="EBI-10961312">
        <id>Q8IYE1</id>
    </interactant>
    <interactant intactId="EBI-618309">
        <id>Q08379</id>
        <label>GOLGA2</label>
    </interactant>
    <organismsDiffer>false</organismsDiffer>
    <experiments>3</experiments>
</comment>
<comment type="interaction">
    <interactant intactId="EBI-10961312">
        <id>Q8IYE1</id>
    </interactant>
    <interactant intactId="EBI-712814">
        <id>P54257</id>
        <label>HAP1</label>
    </interactant>
    <organismsDiffer>false</organismsDiffer>
    <experiments>3</experiments>
</comment>
<comment type="interaction">
    <interactant intactId="EBI-10961312">
        <id>Q8IYE1</id>
    </interactant>
    <interactant intactId="EBI-7116203">
        <id>O75031</id>
        <label>HSF2BP</label>
    </interactant>
    <organismsDiffer>false</organismsDiffer>
    <experiments>3</experiments>
</comment>
<comment type="interaction">
    <interactant intactId="EBI-10961312">
        <id>Q8IYE1</id>
    </interactant>
    <interactant intactId="EBI-3437878">
        <id>Q86T90</id>
        <label>KIAA1328</label>
    </interactant>
    <organismsDiffer>false</organismsDiffer>
    <experiments>3</experiments>
</comment>
<comment type="interaction">
    <interactant intactId="EBI-10961312">
        <id>Q8IYE1</id>
    </interactant>
    <interactant intactId="EBI-1047093">
        <id>O76011</id>
        <label>KRT34</label>
    </interactant>
    <organismsDiffer>false</organismsDiffer>
    <experiments>3</experiments>
</comment>
<comment type="interaction">
    <interactant intactId="EBI-10961312">
        <id>Q8IYE1</id>
    </interactant>
    <interactant intactId="EBI-1216080">
        <id>Q9Y250</id>
        <label>LZTS1</label>
    </interactant>
    <organismsDiffer>false</organismsDiffer>
    <experiments>3</experiments>
</comment>
<comment type="interaction">
    <interactant intactId="EBI-10961312">
        <id>Q8IYE1</id>
    </interactant>
    <interactant intactId="EBI-348259">
        <id>Q96EZ8</id>
        <label>MCRS1</label>
    </interactant>
    <organismsDiffer>false</organismsDiffer>
    <experiments>6</experiments>
</comment>
<comment type="interaction">
    <interactant intactId="EBI-10961312">
        <id>Q8IYE1</id>
    </interactant>
    <interactant intactId="EBI-16439278">
        <id>Q6FHY5</id>
        <label>MEOX2</label>
    </interactant>
    <organismsDiffer>false</organismsDiffer>
    <experiments>3</experiments>
</comment>
<comment type="interaction">
    <interactant intactId="EBI-10961312">
        <id>Q8IYE1</id>
    </interactant>
    <interactant intactId="EBI-17491620">
        <id>P13349</id>
        <label>MYF5</label>
    </interactant>
    <organismsDiffer>false</organismsDiffer>
    <experiments>3</experiments>
</comment>
<comment type="interaction">
    <interactant intactId="EBI-10961312">
        <id>Q8IYE1</id>
    </interactant>
    <interactant intactId="EBI-475646">
        <id>P07196</id>
        <label>NEFL</label>
    </interactant>
    <organismsDiffer>false</organismsDiffer>
    <experiments>3</experiments>
</comment>
<comment type="interaction">
    <interactant intactId="EBI-10961312">
        <id>Q8IYE1</id>
    </interactant>
    <interactant intactId="EBI-748974">
        <id>Q96CV9</id>
        <label>OPTN</label>
    </interactant>
    <organismsDiffer>false</organismsDiffer>
    <experiments>3</experiments>
</comment>
<comment type="interaction">
    <interactant intactId="EBI-10961312">
        <id>Q8IYE1</id>
    </interactant>
    <interactant intactId="EBI-14066006">
        <id>Q4G0R1</id>
        <label>PIBF1</label>
    </interactant>
    <organismsDiffer>false</organismsDiffer>
    <experiments>3</experiments>
</comment>
<comment type="interaction">
    <interactant intactId="EBI-10961312">
        <id>Q8IYE1</id>
    </interactant>
    <interactant intactId="EBI-749285">
        <id>Q15311</id>
        <label>RALBP1</label>
    </interactant>
    <organismsDiffer>false</organismsDiffer>
    <experiments>3</experiments>
</comment>
<comment type="interaction">
    <interactant intactId="EBI-10961312">
        <id>Q8IYE1</id>
    </interactant>
    <interactant intactId="EBI-354112">
        <id>P08865</id>
        <label>RPSA</label>
    </interactant>
    <organismsDiffer>false</organismsDiffer>
    <experiments>3</experiments>
</comment>
<comment type="interaction">
    <interactant intactId="EBI-10961312">
        <id>Q8IYE1</id>
    </interactant>
    <interactant intactId="EBI-740781">
        <id>Q9BT92</id>
        <label>TCHP</label>
    </interactant>
    <organismsDiffer>false</organismsDiffer>
    <experiments>4</experiments>
</comment>
<comment type="interaction">
    <interactant intactId="EBI-10961312">
        <id>Q8IYE1</id>
    </interactant>
    <interactant intactId="EBI-749995">
        <id>P56279</id>
        <label>TCL1A</label>
    </interactant>
    <organismsDiffer>false</organismsDiffer>
    <experiments>3</experiments>
</comment>
<comment type="interaction">
    <interactant intactId="EBI-10961312">
        <id>Q8IYE1</id>
    </interactant>
    <interactant intactId="EBI-1105213">
        <id>Q9UBB9</id>
        <label>TFIP11</label>
    </interactant>
    <organismsDiffer>false</organismsDiffer>
    <experiments>3</experiments>
</comment>
<comment type="interaction">
    <interactant intactId="EBI-10961312">
        <id>Q8IYE1</id>
    </interactant>
    <interactant intactId="EBI-11952721">
        <id>Q05BL1</id>
        <label>TP53BP2</label>
    </interactant>
    <organismsDiffer>false</organismsDiffer>
    <experiments>3</experiments>
</comment>
<comment type="interaction">
    <interactant intactId="EBI-10961312">
        <id>Q8IYE1</id>
    </interactant>
    <interactant intactId="EBI-357631">
        <id>Q13114</id>
        <label>TRAF3</label>
    </interactant>
    <organismsDiffer>false</organismsDiffer>
    <experiments>3</experiments>
</comment>
<comment type="interaction">
    <interactant intactId="EBI-10961312">
        <id>Q8IYE1</id>
    </interactant>
    <interactant intactId="EBI-740098">
        <id>P36406</id>
        <label>TRIM23</label>
    </interactant>
    <organismsDiffer>false</organismsDiffer>
    <experiments>3</experiments>
</comment>
<comment type="interaction">
    <interactant intactId="EBI-10961312">
        <id>Q8IYE1</id>
    </interactant>
    <interactant intactId="EBI-10241197">
        <id>Q3SY00</id>
        <label>TSGA10IP</label>
    </interactant>
    <organismsDiffer>false</organismsDiffer>
    <experiments>3</experiments>
</comment>
<comment type="interaction">
    <interactant intactId="EBI-10961312">
        <id>Q8IYE1</id>
    </interactant>
    <interactant intactId="EBI-6116822">
        <id>Q8N3L3</id>
        <label>TXLNB</label>
    </interactant>
    <organismsDiffer>false</organismsDiffer>
    <experiments>3</experiments>
</comment>
<comment type="interaction">
    <interactant intactId="EBI-10961312">
        <id>Q8IYE1</id>
    </interactant>
    <interactant intactId="EBI-11975223">
        <id>Q70EL1-9</id>
        <label>USP54</label>
    </interactant>
    <organismsDiffer>false</organismsDiffer>
    <experiments>3</experiments>
</comment>
<comment type="interaction">
    <interactant intactId="EBI-10961312">
        <id>Q8IYE1</id>
    </interactant>
    <interactant intactId="EBI-2799833">
        <id>Q8N1B4</id>
        <label>VPS52</label>
    </interactant>
    <organismsDiffer>false</organismsDiffer>
    <experiments>3</experiments>
</comment>
<comment type="interaction">
    <interactant intactId="EBI-10961312">
        <id>Q8IYE1</id>
    </interactant>
    <interactant intactId="EBI-740037">
        <id>O96006</id>
        <label>ZBED1</label>
    </interactant>
    <organismsDiffer>false</organismsDiffer>
    <experiments>3</experiments>
</comment>
<comment type="interaction">
    <interactant intactId="EBI-10961312">
        <id>Q8IYE1</id>
    </interactant>
    <interactant intactId="EBI-723574">
        <id>O15209</id>
        <label>ZBTB22</label>
    </interactant>
    <organismsDiffer>false</organismsDiffer>
    <experiments>3</experiments>
</comment>
<comment type="interaction">
    <interactant intactId="EBI-10961312">
        <id>Q8IYE1</id>
    </interactant>
    <interactant intactId="EBI-740718">
        <id>O43298</id>
        <label>ZBTB43</label>
    </interactant>
    <organismsDiffer>false</organismsDiffer>
    <experiments>3</experiments>
</comment>
<comment type="interaction">
    <interactant intactId="EBI-10961312">
        <id>Q8IYE1</id>
    </interactant>
    <interactant intactId="EBI-10183064">
        <id>Q8N5A5-2</id>
        <label>ZGPAT</label>
    </interactant>
    <organismsDiffer>false</organismsDiffer>
    <experiments>3</experiments>
</comment>
<comment type="interaction">
    <interactant intactId="EBI-10961312">
        <id>Q8IYE1</id>
    </interactant>
    <interactant intactId="EBI-745276">
        <id>Q9BS34</id>
        <label>ZNF670</label>
    </interactant>
    <organismsDiffer>false</organismsDiffer>
    <experiments>3</experiments>
</comment>
<comment type="interaction">
    <interactant intactId="EBI-10961312">
        <id>Q8IYE1</id>
    </interactant>
    <interactant intactId="EBI-527853">
        <id>Q9UGI0</id>
        <label>ZRANB1</label>
    </interactant>
    <organismsDiffer>false</organismsDiffer>
    <experiments>3</experiments>
</comment>
<comment type="subcellular location">
    <subcellularLocation>
        <location evidence="5">Cytoplasm</location>
        <location evidence="5">Cytoskeleton</location>
        <location evidence="5">Microtubule organizing center</location>
        <location evidence="5">Centrosome</location>
        <location evidence="5">Centriolar satellite</location>
    </subcellularLocation>
    <subcellularLocation>
        <location evidence="5">Cytoplasm</location>
        <location evidence="5">Cytoskeleton</location>
        <location evidence="5">Cilium basal body</location>
    </subcellularLocation>
</comment>
<reference key="1">
    <citation type="journal article" date="2006" name="Nature">
        <title>The DNA sequence, annotation and analysis of human chromosome 3.</title>
        <authorList>
            <person name="Muzny D.M."/>
            <person name="Scherer S.E."/>
            <person name="Kaul R."/>
            <person name="Wang J."/>
            <person name="Yu J."/>
            <person name="Sudbrak R."/>
            <person name="Buhay C.J."/>
            <person name="Chen R."/>
            <person name="Cree A."/>
            <person name="Ding Y."/>
            <person name="Dugan-Rocha S."/>
            <person name="Gill R."/>
            <person name="Gunaratne P."/>
            <person name="Harris R.A."/>
            <person name="Hawes A.C."/>
            <person name="Hernandez J."/>
            <person name="Hodgson A.V."/>
            <person name="Hume J."/>
            <person name="Jackson A."/>
            <person name="Khan Z.M."/>
            <person name="Kovar-Smith C."/>
            <person name="Lewis L.R."/>
            <person name="Lozado R.J."/>
            <person name="Metzker M.L."/>
            <person name="Milosavljevic A."/>
            <person name="Miner G.R."/>
            <person name="Morgan M.B."/>
            <person name="Nazareth L.V."/>
            <person name="Scott G."/>
            <person name="Sodergren E."/>
            <person name="Song X.-Z."/>
            <person name="Steffen D."/>
            <person name="Wei S."/>
            <person name="Wheeler D.A."/>
            <person name="Wright M.W."/>
            <person name="Worley K.C."/>
            <person name="Yuan Y."/>
            <person name="Zhang Z."/>
            <person name="Adams C.Q."/>
            <person name="Ansari-Lari M.A."/>
            <person name="Ayele M."/>
            <person name="Brown M.J."/>
            <person name="Chen G."/>
            <person name="Chen Z."/>
            <person name="Clendenning J."/>
            <person name="Clerc-Blankenburg K.P."/>
            <person name="Chen R."/>
            <person name="Chen Z."/>
            <person name="Davis C."/>
            <person name="Delgado O."/>
            <person name="Dinh H.H."/>
            <person name="Dong W."/>
            <person name="Draper H."/>
            <person name="Ernst S."/>
            <person name="Fu G."/>
            <person name="Gonzalez-Garay M.L."/>
            <person name="Garcia D.K."/>
            <person name="Gillett W."/>
            <person name="Gu J."/>
            <person name="Hao B."/>
            <person name="Haugen E."/>
            <person name="Havlak P."/>
            <person name="He X."/>
            <person name="Hennig S."/>
            <person name="Hu S."/>
            <person name="Huang W."/>
            <person name="Jackson L.R."/>
            <person name="Jacob L.S."/>
            <person name="Kelly S.H."/>
            <person name="Kube M."/>
            <person name="Levy R."/>
            <person name="Li Z."/>
            <person name="Liu B."/>
            <person name="Liu J."/>
            <person name="Liu W."/>
            <person name="Lu J."/>
            <person name="Maheshwari M."/>
            <person name="Nguyen B.-V."/>
            <person name="Okwuonu G.O."/>
            <person name="Palmeiri A."/>
            <person name="Pasternak S."/>
            <person name="Perez L.M."/>
            <person name="Phelps K.A."/>
            <person name="Plopper F.J."/>
            <person name="Qiang B."/>
            <person name="Raymond C."/>
            <person name="Rodriguez R."/>
            <person name="Saenphimmachak C."/>
            <person name="Santibanez J."/>
            <person name="Shen H."/>
            <person name="Shen Y."/>
            <person name="Subramanian S."/>
            <person name="Tabor P.E."/>
            <person name="Verduzco D."/>
            <person name="Waldron L."/>
            <person name="Wang J."/>
            <person name="Wang J."/>
            <person name="Wang Q."/>
            <person name="Williams G.A."/>
            <person name="Wong G.K.-S."/>
            <person name="Yao Z."/>
            <person name="Zhang J."/>
            <person name="Zhang X."/>
            <person name="Zhao G."/>
            <person name="Zhou J."/>
            <person name="Zhou Y."/>
            <person name="Nelson D."/>
            <person name="Lehrach H."/>
            <person name="Reinhardt R."/>
            <person name="Naylor S.L."/>
            <person name="Yang H."/>
            <person name="Olson M."/>
            <person name="Weinstock G."/>
            <person name="Gibbs R.A."/>
        </authorList>
    </citation>
    <scope>NUCLEOTIDE SEQUENCE [LARGE SCALE GENOMIC DNA]</scope>
</reference>
<reference key="2">
    <citation type="journal article" date="2004" name="Genome Res.">
        <title>The status, quality, and expansion of the NIH full-length cDNA project: the Mammalian Gene Collection (MGC).</title>
        <authorList>
            <consortium name="The MGC Project Team"/>
        </authorList>
    </citation>
    <scope>NUCLEOTIDE SEQUENCE [LARGE SCALE MRNA]</scope>
    <scope>VARIANT VAL-375</scope>
    <source>
        <tissue>Testis</tissue>
    </source>
</reference>
<reference key="3">
    <citation type="journal article" date="2014" name="J. Cell Sci.">
        <title>Ccdc13 is a novel human centriolar satellite protein required for ciliogenesis and genome stability.</title>
        <authorList>
            <person name="Staples C.J."/>
            <person name="Myers K.N."/>
            <person name="Beveridge R.D."/>
            <person name="Patil A.A."/>
            <person name="Howard A.E."/>
            <person name="Barone G."/>
            <person name="Lee A.J."/>
            <person name="Swanton C."/>
            <person name="Howell M."/>
            <person name="Maslen S."/>
            <person name="Skehel J.M."/>
            <person name="Boulton S.J."/>
            <person name="Collis S.J."/>
        </authorList>
    </citation>
    <scope>FUNCTION</scope>
    <scope>SUBCELLULAR LOCATION</scope>
    <scope>INTERACTION WITH PCM1; CEP290 AND PCNT</scope>
</reference>
<gene>
    <name evidence="7" type="primary">CCDC13</name>
</gene>